<comment type="function">
    <text evidence="1">Catalyzes the attachment of tyrosine to tRNA(Tyr) in a two-step reaction: tyrosine is first activated by ATP to form Tyr-AMP and then transferred to the acceptor end of tRNA(Tyr).</text>
</comment>
<comment type="catalytic activity">
    <reaction evidence="1">
        <text>tRNA(Tyr) + L-tyrosine + ATP = L-tyrosyl-tRNA(Tyr) + AMP + diphosphate + H(+)</text>
        <dbReference type="Rhea" id="RHEA:10220"/>
        <dbReference type="Rhea" id="RHEA-COMP:9706"/>
        <dbReference type="Rhea" id="RHEA-COMP:9707"/>
        <dbReference type="ChEBI" id="CHEBI:15378"/>
        <dbReference type="ChEBI" id="CHEBI:30616"/>
        <dbReference type="ChEBI" id="CHEBI:33019"/>
        <dbReference type="ChEBI" id="CHEBI:58315"/>
        <dbReference type="ChEBI" id="CHEBI:78442"/>
        <dbReference type="ChEBI" id="CHEBI:78536"/>
        <dbReference type="ChEBI" id="CHEBI:456215"/>
        <dbReference type="EC" id="6.1.1.1"/>
    </reaction>
</comment>
<comment type="subunit">
    <text evidence="1">Homodimer.</text>
</comment>
<comment type="subcellular location">
    <subcellularLocation>
        <location evidence="1">Cytoplasm</location>
    </subcellularLocation>
</comment>
<comment type="similarity">
    <text evidence="1">Belongs to the class-I aminoacyl-tRNA synthetase family. TyrS type 1 subfamily.</text>
</comment>
<sequence length="426" mass="46741">MTATNELLQDLKARGLIAQCTADEELAEHLSTDCRTLYCGFDPTADSLHIGSLVPLLVLKRFQQAGHKPLALVGGATGLIGDPSFKAAERQLNTSDVVGDWVNKIRAQVSAFVDFNESKNGAEVVNNLDWIGEINVIEFMRDIGKHFSVNSMIQKESVKQRIDREGSGISFTEFSYMLLQSYDFAALNKAKECTLQIGGSDQWGNITGGIDLTRRMNRNKVFGLTLPLVTKSDGTKFGKTESGTIWLDPSKTSPYAFFQFWLGTADADVYDFLRFFTFLSVDEIAAFEESDKSVQGRPAGQGVLAKEVTRLVHGEEGLASSERITAALFSGDLASLTETDLAQLAQDGLPTTELEASEQTIVEVLTQSELAKSNKMAREFIGNGAVSVNGEKVADAEVILKKEDALFGKYSVIKRGKKLFNLYIWK</sequence>
<proteinExistence type="inferred from homology"/>
<accession>B6EHW3</accession>
<feature type="chain" id="PRO_1000189254" description="Tyrosine--tRNA ligase">
    <location>
        <begin position="1"/>
        <end position="426"/>
    </location>
</feature>
<feature type="domain" description="S4 RNA-binding" evidence="1">
    <location>
        <begin position="359"/>
        <end position="426"/>
    </location>
</feature>
<feature type="short sequence motif" description="'HIGH' region">
    <location>
        <begin position="43"/>
        <end position="52"/>
    </location>
</feature>
<feature type="short sequence motif" description="'KMSKS' region">
    <location>
        <begin position="236"/>
        <end position="240"/>
    </location>
</feature>
<feature type="binding site" evidence="1">
    <location>
        <position position="38"/>
    </location>
    <ligand>
        <name>L-tyrosine</name>
        <dbReference type="ChEBI" id="CHEBI:58315"/>
    </ligand>
</feature>
<feature type="binding site" evidence="1">
    <location>
        <position position="176"/>
    </location>
    <ligand>
        <name>L-tyrosine</name>
        <dbReference type="ChEBI" id="CHEBI:58315"/>
    </ligand>
</feature>
<feature type="binding site" evidence="1">
    <location>
        <position position="180"/>
    </location>
    <ligand>
        <name>L-tyrosine</name>
        <dbReference type="ChEBI" id="CHEBI:58315"/>
    </ligand>
</feature>
<feature type="binding site" evidence="1">
    <location>
        <position position="239"/>
    </location>
    <ligand>
        <name>ATP</name>
        <dbReference type="ChEBI" id="CHEBI:30616"/>
    </ligand>
</feature>
<reference key="1">
    <citation type="journal article" date="2008" name="BMC Genomics">
        <title>The genome sequence of the fish pathogen Aliivibrio salmonicida strain LFI1238 shows extensive evidence of gene decay.</title>
        <authorList>
            <person name="Hjerde E."/>
            <person name="Lorentzen M.S."/>
            <person name="Holden M.T."/>
            <person name="Seeger K."/>
            <person name="Paulsen S."/>
            <person name="Bason N."/>
            <person name="Churcher C."/>
            <person name="Harris D."/>
            <person name="Norbertczak H."/>
            <person name="Quail M.A."/>
            <person name="Sanders S."/>
            <person name="Thurston S."/>
            <person name="Parkhill J."/>
            <person name="Willassen N.P."/>
            <person name="Thomson N.R."/>
        </authorList>
    </citation>
    <scope>NUCLEOTIDE SEQUENCE [LARGE SCALE GENOMIC DNA]</scope>
    <source>
        <strain>LFI1238</strain>
    </source>
</reference>
<name>SYY_ALISL</name>
<organism>
    <name type="scientific">Aliivibrio salmonicida (strain LFI1238)</name>
    <name type="common">Vibrio salmonicida (strain LFI1238)</name>
    <dbReference type="NCBI Taxonomy" id="316275"/>
    <lineage>
        <taxon>Bacteria</taxon>
        <taxon>Pseudomonadati</taxon>
        <taxon>Pseudomonadota</taxon>
        <taxon>Gammaproteobacteria</taxon>
        <taxon>Vibrionales</taxon>
        <taxon>Vibrionaceae</taxon>
        <taxon>Aliivibrio</taxon>
    </lineage>
</organism>
<gene>
    <name evidence="1" type="primary">tyrS</name>
    <name type="ordered locus">VSAL_I0855</name>
</gene>
<protein>
    <recommendedName>
        <fullName evidence="1">Tyrosine--tRNA ligase</fullName>
        <ecNumber evidence="1">6.1.1.1</ecNumber>
    </recommendedName>
    <alternativeName>
        <fullName evidence="1">Tyrosyl-tRNA synthetase</fullName>
        <shortName evidence="1">TyrRS</shortName>
    </alternativeName>
</protein>
<evidence type="ECO:0000255" key="1">
    <source>
        <dbReference type="HAMAP-Rule" id="MF_02006"/>
    </source>
</evidence>
<keyword id="KW-0030">Aminoacyl-tRNA synthetase</keyword>
<keyword id="KW-0067">ATP-binding</keyword>
<keyword id="KW-0963">Cytoplasm</keyword>
<keyword id="KW-0436">Ligase</keyword>
<keyword id="KW-0547">Nucleotide-binding</keyword>
<keyword id="KW-0648">Protein biosynthesis</keyword>
<keyword id="KW-0694">RNA-binding</keyword>
<dbReference type="EC" id="6.1.1.1" evidence="1"/>
<dbReference type="EMBL" id="FM178379">
    <property type="protein sequence ID" value="CAQ78540.1"/>
    <property type="molecule type" value="Genomic_DNA"/>
</dbReference>
<dbReference type="RefSeq" id="WP_012549642.1">
    <property type="nucleotide sequence ID" value="NC_011312.1"/>
</dbReference>
<dbReference type="SMR" id="B6EHW3"/>
<dbReference type="KEGG" id="vsa:VSAL_I0855"/>
<dbReference type="eggNOG" id="COG0162">
    <property type="taxonomic scope" value="Bacteria"/>
</dbReference>
<dbReference type="HOGENOM" id="CLU_024003_0_3_6"/>
<dbReference type="Proteomes" id="UP000001730">
    <property type="component" value="Chromosome 1"/>
</dbReference>
<dbReference type="GO" id="GO:0005829">
    <property type="term" value="C:cytosol"/>
    <property type="evidence" value="ECO:0007669"/>
    <property type="project" value="TreeGrafter"/>
</dbReference>
<dbReference type="GO" id="GO:0005524">
    <property type="term" value="F:ATP binding"/>
    <property type="evidence" value="ECO:0007669"/>
    <property type="project" value="UniProtKB-UniRule"/>
</dbReference>
<dbReference type="GO" id="GO:0003723">
    <property type="term" value="F:RNA binding"/>
    <property type="evidence" value="ECO:0007669"/>
    <property type="project" value="UniProtKB-KW"/>
</dbReference>
<dbReference type="GO" id="GO:0004831">
    <property type="term" value="F:tyrosine-tRNA ligase activity"/>
    <property type="evidence" value="ECO:0007669"/>
    <property type="project" value="UniProtKB-UniRule"/>
</dbReference>
<dbReference type="GO" id="GO:0006437">
    <property type="term" value="P:tyrosyl-tRNA aminoacylation"/>
    <property type="evidence" value="ECO:0007669"/>
    <property type="project" value="UniProtKB-UniRule"/>
</dbReference>
<dbReference type="CDD" id="cd00165">
    <property type="entry name" value="S4"/>
    <property type="match status" value="1"/>
</dbReference>
<dbReference type="CDD" id="cd00805">
    <property type="entry name" value="TyrRS_core"/>
    <property type="match status" value="1"/>
</dbReference>
<dbReference type="FunFam" id="1.10.240.10:FF:000001">
    <property type="entry name" value="Tyrosine--tRNA ligase"/>
    <property type="match status" value="1"/>
</dbReference>
<dbReference type="FunFam" id="3.40.50.620:FF:000008">
    <property type="entry name" value="Tyrosine--tRNA ligase"/>
    <property type="match status" value="1"/>
</dbReference>
<dbReference type="Gene3D" id="3.40.50.620">
    <property type="entry name" value="HUPs"/>
    <property type="match status" value="1"/>
</dbReference>
<dbReference type="Gene3D" id="3.10.290.10">
    <property type="entry name" value="RNA-binding S4 domain"/>
    <property type="match status" value="1"/>
</dbReference>
<dbReference type="Gene3D" id="1.10.240.10">
    <property type="entry name" value="Tyrosyl-Transfer RNA Synthetase"/>
    <property type="match status" value="1"/>
</dbReference>
<dbReference type="HAMAP" id="MF_02006">
    <property type="entry name" value="Tyr_tRNA_synth_type1"/>
    <property type="match status" value="1"/>
</dbReference>
<dbReference type="InterPro" id="IPR002305">
    <property type="entry name" value="aa-tRNA-synth_Ic"/>
</dbReference>
<dbReference type="InterPro" id="IPR014729">
    <property type="entry name" value="Rossmann-like_a/b/a_fold"/>
</dbReference>
<dbReference type="InterPro" id="IPR036986">
    <property type="entry name" value="S4_RNA-bd_sf"/>
</dbReference>
<dbReference type="InterPro" id="IPR054608">
    <property type="entry name" value="SYY-like_C"/>
</dbReference>
<dbReference type="InterPro" id="IPR002307">
    <property type="entry name" value="Tyr-tRNA-ligase"/>
</dbReference>
<dbReference type="InterPro" id="IPR024088">
    <property type="entry name" value="Tyr-tRNA-ligase_bac-type"/>
</dbReference>
<dbReference type="InterPro" id="IPR024107">
    <property type="entry name" value="Tyr-tRNA-ligase_bac_1"/>
</dbReference>
<dbReference type="NCBIfam" id="TIGR00234">
    <property type="entry name" value="tyrS"/>
    <property type="match status" value="1"/>
</dbReference>
<dbReference type="PANTHER" id="PTHR11766:SF0">
    <property type="entry name" value="TYROSINE--TRNA LIGASE, MITOCHONDRIAL"/>
    <property type="match status" value="1"/>
</dbReference>
<dbReference type="PANTHER" id="PTHR11766">
    <property type="entry name" value="TYROSYL-TRNA SYNTHETASE"/>
    <property type="match status" value="1"/>
</dbReference>
<dbReference type="Pfam" id="PF22421">
    <property type="entry name" value="SYY_C-terminal"/>
    <property type="match status" value="1"/>
</dbReference>
<dbReference type="Pfam" id="PF00579">
    <property type="entry name" value="tRNA-synt_1b"/>
    <property type="match status" value="1"/>
</dbReference>
<dbReference type="PRINTS" id="PR01040">
    <property type="entry name" value="TRNASYNTHTYR"/>
</dbReference>
<dbReference type="SUPFAM" id="SSF55174">
    <property type="entry name" value="Alpha-L RNA-binding motif"/>
    <property type="match status" value="1"/>
</dbReference>
<dbReference type="SUPFAM" id="SSF52374">
    <property type="entry name" value="Nucleotidylyl transferase"/>
    <property type="match status" value="1"/>
</dbReference>
<dbReference type="PROSITE" id="PS50889">
    <property type="entry name" value="S4"/>
    <property type="match status" value="1"/>
</dbReference>